<comment type="function">
    <text evidence="2 3 4 5">Required, with oct-8, for the localization of a subset of 7 transmembrane domain odorant receptors, including odr-10, to the cilia of olfactory neurons AWA and AWC (PubMed:24603482, PubMed:9590179). Regulates chemotaxis responses to benzaldehyde, diacetyl and 2,4,5-trimethylthiazole in AWA and AWC neurons (PubMed:8348618). Plays a role in nociceptive neurons to mediate avoidance of high oxygen (PubMed:16581509).</text>
</comment>
<comment type="subunit">
    <text evidence="3">Interacts with odr-8 and odr-10.</text>
</comment>
<comment type="subcellular location">
    <subcellularLocation>
        <location>Endoplasmic reticulum membrane</location>
        <topology>Multi-pass membrane protein</topology>
    </subcellularLocation>
    <subcellularLocation>
        <location>Golgi apparatus membrane</location>
        <topology>Multi-pass membrane protein</topology>
    </subcellularLocation>
    <subcellularLocation>
        <location>Cytoplasmic vesicle</location>
        <location>Secretory vesicle membrane</location>
        <topology>Multi-pass membrane protein</topology>
    </subcellularLocation>
    <subcellularLocation>
        <location>Cell projection</location>
        <location>Dendrite</location>
    </subcellularLocation>
    <subcellularLocation>
        <location>Cell projection</location>
        <location>Axon</location>
    </subcellularLocation>
    <text>Punctate expression in dendrite and axons.</text>
</comment>
<comment type="alternative products">
    <event type="alternative splicing"/>
    <isoform>
        <id>Q8I7F8-1</id>
        <name>b</name>
        <sequence type="displayed"/>
    </isoform>
    <isoform>
        <id>Q8I7F8-2</id>
        <name>a</name>
        <sequence type="described" ref="VSP_038345 VSP_038346"/>
    </isoform>
    <isoform>
        <id>Q8I7F8-3</id>
        <name>c</name>
        <sequence type="described" ref="VSP_028104"/>
    </isoform>
</comment>
<comment type="tissue specificity">
    <text evidence="3 5">Expressed in the amphid head neurons AWA, AWC, AWB, ADF, ADL, ASG, ASH, ASI, ASJ, and ASK, and in the phasmid tail neurons, PHA and PHB.</text>
</comment>
<comment type="developmental stage">
    <text>Expression is seen from 3-fold embryonic stage onward.</text>
</comment>
<comment type="disruption phenotype">
    <text evidence="5">Failure to localize the diacetyl receptor odr-10.</text>
</comment>
<comment type="similarity">
    <text evidence="7">Belongs to the ODR-4 family.</text>
</comment>
<dbReference type="EMBL" id="AF055911">
    <property type="protein sequence ID" value="AAC39022.1"/>
    <property type="molecule type" value="mRNA"/>
</dbReference>
<dbReference type="EMBL" id="FO081313">
    <property type="protein sequence ID" value="CCD70711.1"/>
    <property type="molecule type" value="Genomic_DNA"/>
</dbReference>
<dbReference type="EMBL" id="FO081313">
    <property type="protein sequence ID" value="CCD70712.1"/>
    <property type="molecule type" value="Genomic_DNA"/>
</dbReference>
<dbReference type="EMBL" id="FO081313">
    <property type="protein sequence ID" value="CCD70713.1"/>
    <property type="molecule type" value="Genomic_DNA"/>
</dbReference>
<dbReference type="PIR" id="T26373">
    <property type="entry name" value="T26373"/>
</dbReference>
<dbReference type="PIR" id="T43002">
    <property type="entry name" value="T43002"/>
</dbReference>
<dbReference type="RefSeq" id="NP_001022814.1">
    <property type="nucleotide sequence ID" value="NM_001027643.2"/>
</dbReference>
<dbReference type="RefSeq" id="NP_001022815.1">
    <molecule id="Q8I7F8-3"/>
    <property type="nucleotide sequence ID" value="NM_001027644.9"/>
</dbReference>
<dbReference type="RefSeq" id="NP_001370710.1">
    <molecule id="Q8I7F8-2"/>
    <property type="nucleotide sequence ID" value="NM_001382900.2"/>
</dbReference>
<dbReference type="RefSeq" id="NP_001379932.1">
    <molecule id="Q8I7F8-1"/>
    <property type="nucleotide sequence ID" value="NM_001392129.1"/>
</dbReference>
<dbReference type="RefSeq" id="NP_498477.1">
    <property type="nucleotide sequence ID" value="NM_066076.5"/>
</dbReference>
<dbReference type="SMR" id="Q8I7F8"/>
<dbReference type="BioGRID" id="41165">
    <property type="interactions" value="4"/>
</dbReference>
<dbReference type="DIP" id="DIP-24586N"/>
<dbReference type="FunCoup" id="Q8I7F8">
    <property type="interactions" value="1797"/>
</dbReference>
<dbReference type="STRING" id="6239.Y102E9.1b.1"/>
<dbReference type="PaxDb" id="6239-Y102E9.1b"/>
<dbReference type="PeptideAtlas" id="Q8I7F8"/>
<dbReference type="EnsemblMetazoa" id="Y102E9.1a.1">
    <molecule id="Q8I7F8-2"/>
    <property type="protein sequence ID" value="Y102E9.1a.1"/>
    <property type="gene ID" value="WBGene00003851"/>
</dbReference>
<dbReference type="EnsemblMetazoa" id="Y102E9.1a.2">
    <molecule id="Q8I7F8-2"/>
    <property type="protein sequence ID" value="Y102E9.1a.2"/>
    <property type="gene ID" value="WBGene00003851"/>
</dbReference>
<dbReference type="EnsemblMetazoa" id="Y102E9.1a.3">
    <molecule id="Q8I7F8-2"/>
    <property type="protein sequence ID" value="Y102E9.1a.3"/>
    <property type="gene ID" value="WBGene00003851"/>
</dbReference>
<dbReference type="EnsemblMetazoa" id="Y102E9.1a.4">
    <molecule id="Q8I7F8-2"/>
    <property type="protein sequence ID" value="Y102E9.1a.4"/>
    <property type="gene ID" value="WBGene00003851"/>
</dbReference>
<dbReference type="EnsemblMetazoa" id="Y102E9.1b.1">
    <molecule id="Q8I7F8-1"/>
    <property type="protein sequence ID" value="Y102E9.1b.1"/>
    <property type="gene ID" value="WBGene00003851"/>
</dbReference>
<dbReference type="EnsemblMetazoa" id="Y102E9.1c.1">
    <molecule id="Q8I7F8-3"/>
    <property type="protein sequence ID" value="Y102E9.1c.1"/>
    <property type="gene ID" value="WBGene00003851"/>
</dbReference>
<dbReference type="GeneID" id="175950"/>
<dbReference type="KEGG" id="cel:CELE_Y102E9.1"/>
<dbReference type="UCSC" id="Y102E9.1b">
    <molecule id="Q8I7F8-1"/>
    <property type="organism name" value="c. elegans"/>
</dbReference>
<dbReference type="AGR" id="WB:WBGene00003851"/>
<dbReference type="CTD" id="175950"/>
<dbReference type="WormBase" id="Y102E9.1a">
    <molecule id="Q8I7F8-2"/>
    <property type="protein sequence ID" value="CE28101"/>
    <property type="gene ID" value="WBGene00003851"/>
    <property type="gene designation" value="odr-4"/>
</dbReference>
<dbReference type="WormBase" id="Y102E9.1b">
    <molecule id="Q8I7F8-1"/>
    <property type="protein sequence ID" value="CE32953"/>
    <property type="gene ID" value="WBGene00003851"/>
    <property type="gene designation" value="odr-4"/>
</dbReference>
<dbReference type="WormBase" id="Y102E9.1c">
    <molecule id="Q8I7F8-3"/>
    <property type="protein sequence ID" value="CE32954"/>
    <property type="gene ID" value="WBGene00003851"/>
    <property type="gene designation" value="odr-4"/>
</dbReference>
<dbReference type="eggNOG" id="KOG4703">
    <property type="taxonomic scope" value="Eukaryota"/>
</dbReference>
<dbReference type="InParanoid" id="Q8I7F8"/>
<dbReference type="OMA" id="AELHYES"/>
<dbReference type="OrthoDB" id="21458at2759"/>
<dbReference type="PhylomeDB" id="Q8I7F8"/>
<dbReference type="PRO" id="PR:Q8I7F8"/>
<dbReference type="Proteomes" id="UP000001940">
    <property type="component" value="Chromosome III"/>
</dbReference>
<dbReference type="Bgee" id="WBGene00003851">
    <property type="expression patterns" value="Expressed in material anatomical entity and 5 other cell types or tissues"/>
</dbReference>
<dbReference type="GO" id="GO:0030424">
    <property type="term" value="C:axon"/>
    <property type="evidence" value="ECO:0007669"/>
    <property type="project" value="UniProtKB-SubCell"/>
</dbReference>
<dbReference type="GO" id="GO:0030425">
    <property type="term" value="C:dendrite"/>
    <property type="evidence" value="ECO:0007669"/>
    <property type="project" value="UniProtKB-SubCell"/>
</dbReference>
<dbReference type="GO" id="GO:0005789">
    <property type="term" value="C:endoplasmic reticulum membrane"/>
    <property type="evidence" value="ECO:0007669"/>
    <property type="project" value="UniProtKB-SubCell"/>
</dbReference>
<dbReference type="GO" id="GO:0000139">
    <property type="term" value="C:Golgi membrane"/>
    <property type="evidence" value="ECO:0007669"/>
    <property type="project" value="UniProtKB-SubCell"/>
</dbReference>
<dbReference type="GO" id="GO:0043231">
    <property type="term" value="C:intracellular membrane-bounded organelle"/>
    <property type="evidence" value="ECO:0000314"/>
    <property type="project" value="WormBase"/>
</dbReference>
<dbReference type="GO" id="GO:0032991">
    <property type="term" value="C:protein-containing complex"/>
    <property type="evidence" value="ECO:0000314"/>
    <property type="project" value="WormBase"/>
</dbReference>
<dbReference type="GO" id="GO:0030658">
    <property type="term" value="C:transport vesicle membrane"/>
    <property type="evidence" value="ECO:0007669"/>
    <property type="project" value="UniProtKB-SubCell"/>
</dbReference>
<dbReference type="GO" id="GO:0007635">
    <property type="term" value="P:chemosensory behavior"/>
    <property type="evidence" value="ECO:0000315"/>
    <property type="project" value="WormBase"/>
</dbReference>
<dbReference type="GO" id="GO:0006935">
    <property type="term" value="P:chemotaxis"/>
    <property type="evidence" value="ECO:0007669"/>
    <property type="project" value="UniProtKB-KW"/>
</dbReference>
<dbReference type="GO" id="GO:0042048">
    <property type="term" value="P:olfactory behavior"/>
    <property type="evidence" value="ECO:0000315"/>
    <property type="project" value="UniProtKB"/>
</dbReference>
<dbReference type="GO" id="GO:0008104">
    <property type="term" value="P:protein localization"/>
    <property type="evidence" value="ECO:0000315"/>
    <property type="project" value="WormBase"/>
</dbReference>
<dbReference type="GO" id="GO:0097499">
    <property type="term" value="P:protein localization to non-motile cilium"/>
    <property type="evidence" value="ECO:0000315"/>
    <property type="project" value="WormBase"/>
</dbReference>
<dbReference type="GO" id="GO:0097500">
    <property type="term" value="P:receptor localization to non-motile cilium"/>
    <property type="evidence" value="ECO:0000315"/>
    <property type="project" value="WormBase"/>
</dbReference>
<dbReference type="GO" id="GO:1990834">
    <property type="term" value="P:response to odorant"/>
    <property type="evidence" value="ECO:0000315"/>
    <property type="project" value="UniProtKB"/>
</dbReference>
<dbReference type="GO" id="GO:0007608">
    <property type="term" value="P:sensory perception of smell"/>
    <property type="evidence" value="ECO:0007669"/>
    <property type="project" value="UniProtKB-KW"/>
</dbReference>
<dbReference type="InterPro" id="IPR029454">
    <property type="entry name" value="ODR-4-like"/>
</dbReference>
<dbReference type="PANTHER" id="PTHR33966">
    <property type="entry name" value="PROTEIN ODR-4 HOMOLOG"/>
    <property type="match status" value="1"/>
</dbReference>
<dbReference type="PANTHER" id="PTHR33966:SF1">
    <property type="entry name" value="PROTEIN ODR-4 HOMOLOG"/>
    <property type="match status" value="1"/>
</dbReference>
<dbReference type="Pfam" id="PF14778">
    <property type="entry name" value="ODR4-like"/>
    <property type="match status" value="1"/>
</dbReference>
<reference key="1">
    <citation type="journal article" date="1998" name="Cell">
        <title>Odorant receptor localization to olfactory cilia is mediated by ODR-4, a novel membrane-associated protein.</title>
        <authorList>
            <person name="Dwyer N.D."/>
            <person name="Troemel E.R."/>
            <person name="Sengupta P."/>
            <person name="Bargmann C.I."/>
        </authorList>
    </citation>
    <scope>NUCLEOTIDE SEQUENCE [MRNA] (ISOFORM A)</scope>
    <scope>FUNCTION</scope>
    <scope>SUBCELLULAR LOCATION</scope>
    <scope>TISSUE SPECIFICITY</scope>
    <scope>DISRUPTION PHENOTYPE</scope>
    <source>
        <strain>Bristol N2</strain>
    </source>
</reference>
<reference key="2">
    <citation type="journal article" date="1998" name="Science">
        <title>Genome sequence of the nematode C. elegans: a platform for investigating biology.</title>
        <authorList>
            <consortium name="The C. elegans sequencing consortium"/>
        </authorList>
    </citation>
    <scope>NUCLEOTIDE SEQUENCE [LARGE SCALE GENOMIC DNA]</scope>
    <scope>ALTERNATIVE SPLICING</scope>
    <source>
        <strain>Bristol N2</strain>
    </source>
</reference>
<reference key="3">
    <citation type="journal article" date="1993" name="Cell">
        <title>Odorant-selective genes and neurons mediate olfaction in C. elegans.</title>
        <authorList>
            <person name="Bargmann C.I."/>
            <person name="Hartwieg E."/>
            <person name="Horvitz H.R."/>
        </authorList>
    </citation>
    <scope>FUNCTION</scope>
</reference>
<reference key="4">
    <citation type="journal article" date="2006" name="Curr. Biol.">
        <title>Behavioral motifs and neural pathways coordinating O2 responses and aggregation in C. elegans.</title>
        <authorList>
            <person name="Rogers C."/>
            <person name="Persson A."/>
            <person name="Cheung B."/>
            <person name="de Bono M."/>
        </authorList>
    </citation>
    <scope>FUNCTION</scope>
</reference>
<reference key="5">
    <citation type="journal article" date="2014" name="PLoS Genet.">
        <title>An ER complex of ODR-4 and ODR-8/Ufm1 specific protease 2 promotes GPCR maturation by a Ufm1-independent mechanism.</title>
        <authorList>
            <person name="Chen C."/>
            <person name="Itakura E."/>
            <person name="Weber K.P."/>
            <person name="Hegde R.S."/>
            <person name="de Bono M."/>
        </authorList>
    </citation>
    <scope>FUNCTION</scope>
    <scope>INTERACTION WITH ODR-8 AND ODR-10</scope>
    <scope>SUBCELLULAR LOCATION</scope>
    <scope>TISSUE SPECIFICITY</scope>
</reference>
<sequence length="475" mass="53697">MTRNRRKSKTTATSHPELHLEKVDPMKTVTESMILFDVQLQEWVTKSAKNHEFVLSDKGIPASAYFLLGSFCSDGDIHVAYASKCPVHSSALEENATESSKMLEDEWMSDHAERLLRMLPGGIHVVGIAWFSDKKTFSDRKSHIHKTLGRIQKMNNQITTANVDDSISDNMITVFFETPSTTPIGAIIDVTNRGNDSAQKVQFQKLEWISLVTNASARIVHNVPVDTGRPTDFYSDLVVATKNFVNNLFQCEFTLLDGEIRDDKEPLIKDIKKNKKTTIEAQLFLNPLYNRELGAIDDIASNMHEVLFDIEVRAAVPIRSTVKDAIRAIKHHLVRNLFARVELHYESMEVVEEERSPKTGITVHQLPRPATTVLYTHPAILINDFLFEADNVEDAQKNFDDMMDLQTSIEHVDEGWERALTPEEMEAVRTPIEDLHFVDFDGSSDSWCTTKTILITIALIIGLLASIIYFTVAHS</sequence>
<evidence type="ECO:0000255" key="1"/>
<evidence type="ECO:0000269" key="2">
    <source>
    </source>
</evidence>
<evidence type="ECO:0000269" key="3">
    <source>
    </source>
</evidence>
<evidence type="ECO:0000269" key="4">
    <source>
    </source>
</evidence>
<evidence type="ECO:0000269" key="5">
    <source>
    </source>
</evidence>
<evidence type="ECO:0000303" key="6">
    <source>
    </source>
</evidence>
<evidence type="ECO:0000305" key="7"/>
<protein>
    <recommendedName>
        <fullName>Odorant response abnormal protein 4</fullName>
    </recommendedName>
</protein>
<feature type="chain" id="PRO_0000304689" description="Odorant response abnormal protein 4">
    <location>
        <begin position="1"/>
        <end position="475"/>
    </location>
</feature>
<feature type="transmembrane region" description="Helical" evidence="1">
    <location>
        <begin position="60"/>
        <end position="80"/>
    </location>
</feature>
<feature type="transmembrane region" description="Helical" evidence="1">
    <location>
        <begin position="453"/>
        <end position="473"/>
    </location>
</feature>
<feature type="splice variant" id="VSP_038345" description="In isoform a." evidence="6">
    <location>
        <begin position="1"/>
        <end position="32"/>
    </location>
</feature>
<feature type="splice variant" id="VSP_028104" description="In isoform c." evidence="7">
    <location>
        <begin position="28"/>
        <end position="29"/>
    </location>
</feature>
<feature type="splice variant" id="VSP_038346" description="In isoform a." evidence="6">
    <original>Y</original>
    <variation>FLD</variation>
    <location>
        <position position="289"/>
    </location>
</feature>
<accession>Q8I7F8</accession>
<accession>O61648</accession>
<accession>Q23233</accession>
<accession>Q8I7F7</accession>
<proteinExistence type="evidence at protein level"/>
<keyword id="KW-0025">Alternative splicing</keyword>
<keyword id="KW-0966">Cell projection</keyword>
<keyword id="KW-0145">Chemotaxis</keyword>
<keyword id="KW-0968">Cytoplasmic vesicle</keyword>
<keyword id="KW-0256">Endoplasmic reticulum</keyword>
<keyword id="KW-0333">Golgi apparatus</keyword>
<keyword id="KW-0472">Membrane</keyword>
<keyword id="KW-0552">Olfaction</keyword>
<keyword id="KW-1185">Reference proteome</keyword>
<keyword id="KW-0716">Sensory transduction</keyword>
<keyword id="KW-0812">Transmembrane</keyword>
<keyword id="KW-1133">Transmembrane helix</keyword>
<organism>
    <name type="scientific">Caenorhabditis elegans</name>
    <dbReference type="NCBI Taxonomy" id="6239"/>
    <lineage>
        <taxon>Eukaryota</taxon>
        <taxon>Metazoa</taxon>
        <taxon>Ecdysozoa</taxon>
        <taxon>Nematoda</taxon>
        <taxon>Chromadorea</taxon>
        <taxon>Rhabditida</taxon>
        <taxon>Rhabditina</taxon>
        <taxon>Rhabditomorpha</taxon>
        <taxon>Rhabditoidea</taxon>
        <taxon>Rhabditidae</taxon>
        <taxon>Peloderinae</taxon>
        <taxon>Caenorhabditis</taxon>
    </lineage>
</organism>
<name>ODR4_CAEEL</name>
<gene>
    <name type="primary">odr-4</name>
    <name type="ORF">Y102E9.1</name>
</gene>